<keyword id="KW-0963">Cytoplasm</keyword>
<keyword id="KW-0489">Methyltransferase</keyword>
<keyword id="KW-1185">Reference proteome</keyword>
<keyword id="KW-0694">RNA-binding</keyword>
<keyword id="KW-0698">rRNA processing</keyword>
<keyword id="KW-0949">S-adenosyl-L-methionine</keyword>
<keyword id="KW-0808">Transferase</keyword>
<protein>
    <recommendedName>
        <fullName evidence="1">Ribosomal RNA small subunit methyltransferase A</fullName>
        <ecNumber evidence="1">2.1.1.182</ecNumber>
    </recommendedName>
    <alternativeName>
        <fullName evidence="1">16S rRNA (adenine(1518)-N(6)/adenine(1519)-N(6))-dimethyltransferase</fullName>
    </alternativeName>
    <alternativeName>
        <fullName evidence="1">16S rRNA dimethyladenosine transferase</fullName>
    </alternativeName>
    <alternativeName>
        <fullName evidence="1">16S rRNA dimethylase</fullName>
    </alternativeName>
    <alternativeName>
        <fullName evidence="1">S-adenosylmethionine-6-N', N'-adenosyl(rRNA) dimethyltransferase</fullName>
    </alternativeName>
</protein>
<feature type="chain" id="PRO_0000257298" description="Ribosomal RNA small subunit methyltransferase A">
    <location>
        <begin position="1"/>
        <end position="296"/>
    </location>
</feature>
<feature type="binding site" evidence="1">
    <location>
        <position position="32"/>
    </location>
    <ligand>
        <name>S-adenosyl-L-methionine</name>
        <dbReference type="ChEBI" id="CHEBI:59789"/>
    </ligand>
</feature>
<feature type="binding site" evidence="1">
    <location>
        <position position="34"/>
    </location>
    <ligand>
        <name>S-adenosyl-L-methionine</name>
        <dbReference type="ChEBI" id="CHEBI:59789"/>
    </ligand>
</feature>
<feature type="binding site" evidence="1">
    <location>
        <position position="59"/>
    </location>
    <ligand>
        <name>S-adenosyl-L-methionine</name>
        <dbReference type="ChEBI" id="CHEBI:59789"/>
    </ligand>
</feature>
<feature type="binding site" evidence="1">
    <location>
        <position position="80"/>
    </location>
    <ligand>
        <name>S-adenosyl-L-methionine</name>
        <dbReference type="ChEBI" id="CHEBI:59789"/>
    </ligand>
</feature>
<feature type="binding site" evidence="1">
    <location>
        <position position="105"/>
    </location>
    <ligand>
        <name>S-adenosyl-L-methionine</name>
        <dbReference type="ChEBI" id="CHEBI:59789"/>
    </ligand>
</feature>
<feature type="binding site" evidence="1">
    <location>
        <position position="130"/>
    </location>
    <ligand>
        <name>S-adenosyl-L-methionine</name>
        <dbReference type="ChEBI" id="CHEBI:59789"/>
    </ligand>
</feature>
<accession>Q1WV73</accession>
<gene>
    <name evidence="1" type="primary">rsmA</name>
    <name evidence="1" type="synonym">ksgA</name>
    <name type="ordered locus">LSL_0229</name>
</gene>
<evidence type="ECO:0000255" key="1">
    <source>
        <dbReference type="HAMAP-Rule" id="MF_00607"/>
    </source>
</evidence>
<proteinExistence type="inferred from homology"/>
<sequence length="296" mass="33029">MANELPEIANPTRTRAIMETYGLTFKKSLGQNFLTDINILKNIVAAAEVSEEDNVIEIGPGIGALTEQLAKRANKVMALEIDDRLLPVLADTLSPYENVEVVHQDILKADLKALIAEHFEPGHKLKLVANLPYYITTPILMHLLDSGIEFETIVVMMQKEVAERLAANPGTKAYGSLSVAVQYEMDSEIAFIVPKTVFVPQPNVDSAIIVLNKKKVKPKEPQDEKHFKKLVKGSFMHRRKSLWNNLQSLYGKDPETKEKMLQALEVADIKQSIRAEKLTVADFINLSDALVKMGIN</sequence>
<reference key="1">
    <citation type="journal article" date="2006" name="Proc. Natl. Acad. Sci. U.S.A.">
        <title>Multireplicon genome architecture of Lactobacillus salivarius.</title>
        <authorList>
            <person name="Claesson M.J."/>
            <person name="Li Y."/>
            <person name="Leahy S."/>
            <person name="Canchaya C."/>
            <person name="van Pijkeren J.P."/>
            <person name="Cerdeno-Tarraga A.M."/>
            <person name="Parkhill J."/>
            <person name="Flynn S."/>
            <person name="O'Sullivan G.C."/>
            <person name="Collins J.K."/>
            <person name="Higgins D."/>
            <person name="Shanahan F."/>
            <person name="Fitzgerald G.F."/>
            <person name="van Sinderen D."/>
            <person name="O'Toole P.W."/>
        </authorList>
    </citation>
    <scope>NUCLEOTIDE SEQUENCE [LARGE SCALE GENOMIC DNA]</scope>
    <source>
        <strain>UCC118</strain>
    </source>
</reference>
<name>RSMA_LIGS1</name>
<organism>
    <name type="scientific">Ligilactobacillus salivarius (strain UCC118)</name>
    <name type="common">Lactobacillus salivarius</name>
    <dbReference type="NCBI Taxonomy" id="362948"/>
    <lineage>
        <taxon>Bacteria</taxon>
        <taxon>Bacillati</taxon>
        <taxon>Bacillota</taxon>
        <taxon>Bacilli</taxon>
        <taxon>Lactobacillales</taxon>
        <taxon>Lactobacillaceae</taxon>
        <taxon>Ligilactobacillus</taxon>
    </lineage>
</organism>
<comment type="function">
    <text evidence="1">Specifically dimethylates two adjacent adenosines (A1518 and A1519) in the loop of a conserved hairpin near the 3'-end of 16S rRNA in the 30S particle. May play a critical role in biogenesis of 30S subunits.</text>
</comment>
<comment type="catalytic activity">
    <reaction evidence="1">
        <text>adenosine(1518)/adenosine(1519) in 16S rRNA + 4 S-adenosyl-L-methionine = N(6)-dimethyladenosine(1518)/N(6)-dimethyladenosine(1519) in 16S rRNA + 4 S-adenosyl-L-homocysteine + 4 H(+)</text>
        <dbReference type="Rhea" id="RHEA:19609"/>
        <dbReference type="Rhea" id="RHEA-COMP:10232"/>
        <dbReference type="Rhea" id="RHEA-COMP:10233"/>
        <dbReference type="ChEBI" id="CHEBI:15378"/>
        <dbReference type="ChEBI" id="CHEBI:57856"/>
        <dbReference type="ChEBI" id="CHEBI:59789"/>
        <dbReference type="ChEBI" id="CHEBI:74411"/>
        <dbReference type="ChEBI" id="CHEBI:74493"/>
        <dbReference type="EC" id="2.1.1.182"/>
    </reaction>
</comment>
<comment type="subcellular location">
    <subcellularLocation>
        <location evidence="1">Cytoplasm</location>
    </subcellularLocation>
</comment>
<comment type="similarity">
    <text evidence="1">Belongs to the class I-like SAM-binding methyltransferase superfamily. rRNA adenine N(6)-methyltransferase family. RsmA subfamily.</text>
</comment>
<dbReference type="EC" id="2.1.1.182" evidence="1"/>
<dbReference type="EMBL" id="CP000233">
    <property type="protein sequence ID" value="ABD99044.1"/>
    <property type="molecule type" value="Genomic_DNA"/>
</dbReference>
<dbReference type="RefSeq" id="WP_011475602.1">
    <property type="nucleotide sequence ID" value="NC_007929.1"/>
</dbReference>
<dbReference type="RefSeq" id="YP_535127.1">
    <property type="nucleotide sequence ID" value="NC_007929.1"/>
</dbReference>
<dbReference type="SMR" id="Q1WV73"/>
<dbReference type="STRING" id="362948.LSL_0229"/>
<dbReference type="KEGG" id="lsl:LSL_0229"/>
<dbReference type="PATRIC" id="fig|362948.14.peg.313"/>
<dbReference type="HOGENOM" id="CLU_041220_0_0_9"/>
<dbReference type="OrthoDB" id="9814755at2"/>
<dbReference type="Proteomes" id="UP000006559">
    <property type="component" value="Chromosome"/>
</dbReference>
<dbReference type="GO" id="GO:0005829">
    <property type="term" value="C:cytosol"/>
    <property type="evidence" value="ECO:0007669"/>
    <property type="project" value="TreeGrafter"/>
</dbReference>
<dbReference type="GO" id="GO:0052908">
    <property type="term" value="F:16S rRNA (adenine(1518)-N(6)/adenine(1519)-N(6))-dimethyltransferase activity"/>
    <property type="evidence" value="ECO:0007669"/>
    <property type="project" value="UniProtKB-EC"/>
</dbReference>
<dbReference type="GO" id="GO:0003723">
    <property type="term" value="F:RNA binding"/>
    <property type="evidence" value="ECO:0007669"/>
    <property type="project" value="UniProtKB-KW"/>
</dbReference>
<dbReference type="CDD" id="cd02440">
    <property type="entry name" value="AdoMet_MTases"/>
    <property type="match status" value="1"/>
</dbReference>
<dbReference type="FunFam" id="3.40.50.150:FF:000023">
    <property type="entry name" value="Ribosomal RNA small subunit methyltransferase A"/>
    <property type="match status" value="1"/>
</dbReference>
<dbReference type="Gene3D" id="1.10.8.100">
    <property type="entry name" value="Ribosomal RNA adenine dimethylase-like, domain 2"/>
    <property type="match status" value="1"/>
</dbReference>
<dbReference type="Gene3D" id="3.40.50.150">
    <property type="entry name" value="Vaccinia Virus protein VP39"/>
    <property type="match status" value="1"/>
</dbReference>
<dbReference type="HAMAP" id="MF_00607">
    <property type="entry name" value="16SrRNA_methyltr_A"/>
    <property type="match status" value="1"/>
</dbReference>
<dbReference type="InterPro" id="IPR001737">
    <property type="entry name" value="KsgA/Erm"/>
</dbReference>
<dbReference type="InterPro" id="IPR023165">
    <property type="entry name" value="rRNA_Ade_diMease-like_C"/>
</dbReference>
<dbReference type="InterPro" id="IPR020596">
    <property type="entry name" value="rRNA_Ade_Mease_Trfase_CS"/>
</dbReference>
<dbReference type="InterPro" id="IPR020598">
    <property type="entry name" value="rRNA_Ade_methylase_Trfase_N"/>
</dbReference>
<dbReference type="InterPro" id="IPR011530">
    <property type="entry name" value="rRNA_adenine_dimethylase"/>
</dbReference>
<dbReference type="InterPro" id="IPR029063">
    <property type="entry name" value="SAM-dependent_MTases_sf"/>
</dbReference>
<dbReference type="NCBIfam" id="TIGR00755">
    <property type="entry name" value="ksgA"/>
    <property type="match status" value="1"/>
</dbReference>
<dbReference type="PANTHER" id="PTHR11727">
    <property type="entry name" value="DIMETHYLADENOSINE TRANSFERASE"/>
    <property type="match status" value="1"/>
</dbReference>
<dbReference type="PANTHER" id="PTHR11727:SF7">
    <property type="entry name" value="DIMETHYLADENOSINE TRANSFERASE-RELATED"/>
    <property type="match status" value="1"/>
</dbReference>
<dbReference type="Pfam" id="PF00398">
    <property type="entry name" value="RrnaAD"/>
    <property type="match status" value="1"/>
</dbReference>
<dbReference type="SMART" id="SM00650">
    <property type="entry name" value="rADc"/>
    <property type="match status" value="1"/>
</dbReference>
<dbReference type="SUPFAM" id="SSF53335">
    <property type="entry name" value="S-adenosyl-L-methionine-dependent methyltransferases"/>
    <property type="match status" value="1"/>
</dbReference>
<dbReference type="PROSITE" id="PS01131">
    <property type="entry name" value="RRNA_A_DIMETH"/>
    <property type="match status" value="1"/>
</dbReference>
<dbReference type="PROSITE" id="PS51689">
    <property type="entry name" value="SAM_RNA_A_N6_MT"/>
    <property type="match status" value="1"/>
</dbReference>